<name>TRPB_RHOPA</name>
<proteinExistence type="inferred from homology"/>
<organism>
    <name type="scientific">Rhodopseudomonas palustris (strain ATCC BAA-98 / CGA009)</name>
    <dbReference type="NCBI Taxonomy" id="258594"/>
    <lineage>
        <taxon>Bacteria</taxon>
        <taxon>Pseudomonadati</taxon>
        <taxon>Pseudomonadota</taxon>
        <taxon>Alphaproteobacteria</taxon>
        <taxon>Hyphomicrobiales</taxon>
        <taxon>Nitrobacteraceae</taxon>
        <taxon>Rhodopseudomonas</taxon>
    </lineage>
</organism>
<protein>
    <recommendedName>
        <fullName evidence="1">Tryptophan synthase beta chain</fullName>
        <ecNumber evidence="1">4.2.1.20</ecNumber>
    </recommendedName>
</protein>
<feature type="chain" id="PRO_1000095811" description="Tryptophan synthase beta chain">
    <location>
        <begin position="1"/>
        <end position="404"/>
    </location>
</feature>
<feature type="modified residue" description="N6-(pyridoxal phosphate)lysine" evidence="1">
    <location>
        <position position="98"/>
    </location>
</feature>
<evidence type="ECO:0000255" key="1">
    <source>
        <dbReference type="HAMAP-Rule" id="MF_00133"/>
    </source>
</evidence>
<dbReference type="EC" id="4.2.1.20" evidence="1"/>
<dbReference type="EMBL" id="BX572593">
    <property type="protein sequence ID" value="CAE25513.1"/>
    <property type="molecule type" value="Genomic_DNA"/>
</dbReference>
<dbReference type="RefSeq" id="WP_011155640.1">
    <property type="nucleotide sequence ID" value="NZ_CP116810.1"/>
</dbReference>
<dbReference type="SMR" id="Q6NDN6"/>
<dbReference type="STRING" id="258594.RPA0069"/>
<dbReference type="GeneID" id="66891070"/>
<dbReference type="eggNOG" id="COG0133">
    <property type="taxonomic scope" value="Bacteria"/>
</dbReference>
<dbReference type="HOGENOM" id="CLU_016734_3_1_5"/>
<dbReference type="PhylomeDB" id="Q6NDN6"/>
<dbReference type="UniPathway" id="UPA00035">
    <property type="reaction ID" value="UER00044"/>
</dbReference>
<dbReference type="GO" id="GO:0005737">
    <property type="term" value="C:cytoplasm"/>
    <property type="evidence" value="ECO:0007669"/>
    <property type="project" value="TreeGrafter"/>
</dbReference>
<dbReference type="GO" id="GO:0004834">
    <property type="term" value="F:tryptophan synthase activity"/>
    <property type="evidence" value="ECO:0007669"/>
    <property type="project" value="UniProtKB-UniRule"/>
</dbReference>
<dbReference type="CDD" id="cd06446">
    <property type="entry name" value="Trp-synth_B"/>
    <property type="match status" value="1"/>
</dbReference>
<dbReference type="FunFam" id="3.40.50.1100:FF:000001">
    <property type="entry name" value="Tryptophan synthase beta chain"/>
    <property type="match status" value="1"/>
</dbReference>
<dbReference type="FunFam" id="3.40.50.1100:FF:000004">
    <property type="entry name" value="Tryptophan synthase beta chain"/>
    <property type="match status" value="1"/>
</dbReference>
<dbReference type="Gene3D" id="3.40.50.1100">
    <property type="match status" value="2"/>
</dbReference>
<dbReference type="HAMAP" id="MF_00133">
    <property type="entry name" value="Trp_synth_beta"/>
    <property type="match status" value="1"/>
</dbReference>
<dbReference type="InterPro" id="IPR006653">
    <property type="entry name" value="Trp_synth_b_CS"/>
</dbReference>
<dbReference type="InterPro" id="IPR006654">
    <property type="entry name" value="Trp_synth_beta"/>
</dbReference>
<dbReference type="InterPro" id="IPR023026">
    <property type="entry name" value="Trp_synth_beta/beta-like"/>
</dbReference>
<dbReference type="InterPro" id="IPR001926">
    <property type="entry name" value="TrpB-like_PALP"/>
</dbReference>
<dbReference type="InterPro" id="IPR036052">
    <property type="entry name" value="TrpB-like_PALP_sf"/>
</dbReference>
<dbReference type="NCBIfam" id="TIGR00263">
    <property type="entry name" value="trpB"/>
    <property type="match status" value="1"/>
</dbReference>
<dbReference type="PANTHER" id="PTHR48077:SF3">
    <property type="entry name" value="TRYPTOPHAN SYNTHASE"/>
    <property type="match status" value="1"/>
</dbReference>
<dbReference type="PANTHER" id="PTHR48077">
    <property type="entry name" value="TRYPTOPHAN SYNTHASE-RELATED"/>
    <property type="match status" value="1"/>
</dbReference>
<dbReference type="Pfam" id="PF00291">
    <property type="entry name" value="PALP"/>
    <property type="match status" value="1"/>
</dbReference>
<dbReference type="PIRSF" id="PIRSF001413">
    <property type="entry name" value="Trp_syn_beta"/>
    <property type="match status" value="1"/>
</dbReference>
<dbReference type="SUPFAM" id="SSF53686">
    <property type="entry name" value="Tryptophan synthase beta subunit-like PLP-dependent enzymes"/>
    <property type="match status" value="1"/>
</dbReference>
<dbReference type="PROSITE" id="PS00168">
    <property type="entry name" value="TRP_SYNTHASE_BETA"/>
    <property type="match status" value="1"/>
</dbReference>
<reference key="1">
    <citation type="journal article" date="2004" name="Nat. Biotechnol.">
        <title>Complete genome sequence of the metabolically versatile photosynthetic bacterium Rhodopseudomonas palustris.</title>
        <authorList>
            <person name="Larimer F.W."/>
            <person name="Chain P."/>
            <person name="Hauser L."/>
            <person name="Lamerdin J.E."/>
            <person name="Malfatti S."/>
            <person name="Do L."/>
            <person name="Land M.L."/>
            <person name="Pelletier D.A."/>
            <person name="Beatty J.T."/>
            <person name="Lang A.S."/>
            <person name="Tabita F.R."/>
            <person name="Gibson J.L."/>
            <person name="Hanson T.E."/>
            <person name="Bobst C."/>
            <person name="Torres y Torres J.L."/>
            <person name="Peres C."/>
            <person name="Harrison F.H."/>
            <person name="Gibson J."/>
            <person name="Harwood C.S."/>
        </authorList>
    </citation>
    <scope>NUCLEOTIDE SEQUENCE [LARGE SCALE GENOMIC DNA]</scope>
    <source>
        <strain>ATCC BAA-98 / CGA009</strain>
    </source>
</reference>
<sequence length="404" mass="43570">MNQALPNSFRSGPDERGHFGIYGGRFVAETLMPLILDLEKAYAEAKADPAFRAEMDNHLKHYVGRPSALYFAERLTEHFGGAKIYFKREDLNHTGAHKVNNVLGQIMLAKRMGKPRVIAETGAGMHGVATATMCAKFGLECVVFMGAVDVERQQPNVLRMKALGAEVRPVTSGANTLKDAMNEALRDWVTNVHDTFYCIGTVAGPHPYPMMVRDFQAVIGQEVREQIMQAEGRLPDSLVACIGGGSNAMGLFHPFLDDPGVAIYGVEAAGHGLDKLHAASIAGGKPGVLHGNRTYLLMDADGQIEEAHSISAGLDYPGVGPEHSWLHDVGRVNFLSATDTEALDAFKLCCRLEGIIPALEPSHALAKVADLAPKLPKDHLMVVNMSGRGDKDLASVAEHLGGKF</sequence>
<keyword id="KW-0028">Amino-acid biosynthesis</keyword>
<keyword id="KW-0057">Aromatic amino acid biosynthesis</keyword>
<keyword id="KW-0456">Lyase</keyword>
<keyword id="KW-0663">Pyridoxal phosphate</keyword>
<keyword id="KW-0822">Tryptophan biosynthesis</keyword>
<gene>
    <name evidence="1" type="primary">trpB</name>
    <name type="ordered locus">RPA0069</name>
</gene>
<accession>Q6NDN6</accession>
<comment type="function">
    <text evidence="1">The beta subunit is responsible for the synthesis of L-tryptophan from indole and L-serine.</text>
</comment>
<comment type="catalytic activity">
    <reaction evidence="1">
        <text>(1S,2R)-1-C-(indol-3-yl)glycerol 3-phosphate + L-serine = D-glyceraldehyde 3-phosphate + L-tryptophan + H2O</text>
        <dbReference type="Rhea" id="RHEA:10532"/>
        <dbReference type="ChEBI" id="CHEBI:15377"/>
        <dbReference type="ChEBI" id="CHEBI:33384"/>
        <dbReference type="ChEBI" id="CHEBI:57912"/>
        <dbReference type="ChEBI" id="CHEBI:58866"/>
        <dbReference type="ChEBI" id="CHEBI:59776"/>
        <dbReference type="EC" id="4.2.1.20"/>
    </reaction>
</comment>
<comment type="cofactor">
    <cofactor evidence="1">
        <name>pyridoxal 5'-phosphate</name>
        <dbReference type="ChEBI" id="CHEBI:597326"/>
    </cofactor>
</comment>
<comment type="pathway">
    <text evidence="1">Amino-acid biosynthesis; L-tryptophan biosynthesis; L-tryptophan from chorismate: step 5/5.</text>
</comment>
<comment type="subunit">
    <text evidence="1">Tetramer of two alpha and two beta chains.</text>
</comment>
<comment type="similarity">
    <text evidence="1">Belongs to the TrpB family.</text>
</comment>